<reference key="1">
    <citation type="journal article" date="2001" name="Lancet">
        <title>Whole genome sequencing of meticillin-resistant Staphylococcus aureus.</title>
        <authorList>
            <person name="Kuroda M."/>
            <person name="Ohta T."/>
            <person name="Uchiyama I."/>
            <person name="Baba T."/>
            <person name="Yuzawa H."/>
            <person name="Kobayashi I."/>
            <person name="Cui L."/>
            <person name="Oguchi A."/>
            <person name="Aoki K."/>
            <person name="Nagai Y."/>
            <person name="Lian J.-Q."/>
            <person name="Ito T."/>
            <person name="Kanamori M."/>
            <person name="Matsumaru H."/>
            <person name="Maruyama A."/>
            <person name="Murakami H."/>
            <person name="Hosoyama A."/>
            <person name="Mizutani-Ui Y."/>
            <person name="Takahashi N.K."/>
            <person name="Sawano T."/>
            <person name="Inoue R."/>
            <person name="Kaito C."/>
            <person name="Sekimizu K."/>
            <person name="Hirakawa H."/>
            <person name="Kuhara S."/>
            <person name="Goto S."/>
            <person name="Yabuzaki J."/>
            <person name="Kanehisa M."/>
            <person name="Yamashita A."/>
            <person name="Oshima K."/>
            <person name="Furuya K."/>
            <person name="Yoshino C."/>
            <person name="Shiba T."/>
            <person name="Hattori M."/>
            <person name="Ogasawara N."/>
            <person name="Hayashi H."/>
            <person name="Hiramatsu K."/>
        </authorList>
    </citation>
    <scope>NUCLEOTIDE SEQUENCE [LARGE SCALE GENOMIC DNA]</scope>
    <source>
        <strain>Mu50 / ATCC 700699</strain>
    </source>
</reference>
<feature type="chain" id="PRO_0000111622" description="Ribonuclease HII">
    <location>
        <begin position="1"/>
        <end position="255"/>
    </location>
</feature>
<feature type="domain" description="RNase H type-2" evidence="2">
    <location>
        <begin position="72"/>
        <end position="255"/>
    </location>
</feature>
<feature type="binding site" evidence="1">
    <location>
        <position position="78"/>
    </location>
    <ligand>
        <name>a divalent metal cation</name>
        <dbReference type="ChEBI" id="CHEBI:60240"/>
    </ligand>
</feature>
<feature type="binding site" evidence="1">
    <location>
        <position position="79"/>
    </location>
    <ligand>
        <name>a divalent metal cation</name>
        <dbReference type="ChEBI" id="CHEBI:60240"/>
    </ligand>
</feature>
<feature type="binding site" evidence="1">
    <location>
        <position position="170"/>
    </location>
    <ligand>
        <name>a divalent metal cation</name>
        <dbReference type="ChEBI" id="CHEBI:60240"/>
    </ligand>
</feature>
<comment type="function">
    <text evidence="1">Endonuclease that specifically degrades the RNA of RNA-DNA hybrids.</text>
</comment>
<comment type="catalytic activity">
    <reaction evidence="1">
        <text>Endonucleolytic cleavage to 5'-phosphomonoester.</text>
        <dbReference type="EC" id="3.1.26.4"/>
    </reaction>
</comment>
<comment type="cofactor">
    <cofactor evidence="1">
        <name>Mn(2+)</name>
        <dbReference type="ChEBI" id="CHEBI:29035"/>
    </cofactor>
    <cofactor evidence="1">
        <name>Mg(2+)</name>
        <dbReference type="ChEBI" id="CHEBI:18420"/>
    </cofactor>
    <text evidence="1">Manganese or magnesium. Binds 1 divalent metal ion per monomer in the absence of substrate. May bind a second metal ion after substrate binding.</text>
</comment>
<comment type="subcellular location">
    <subcellularLocation>
        <location evidence="1">Cytoplasm</location>
    </subcellularLocation>
</comment>
<comment type="similarity">
    <text evidence="1">Belongs to the RNase HII family.</text>
</comment>
<sequence length="255" mass="28527">MTLTIKEVTQLINAVNTIEELENHECFLDERKGVQNAIARRRKALEKEQALKEKYVEMTYFENEILKEHPNAIICGIDEVGRGPLAGPVVACATILNSNHNYLGLDDSKKVPITKRLELNEALKNEVTAFAYGIATAEEIDEFNIYKATQIAMQRAIDGLSVQPTHLLIDAMTLDNALPQVSLIKGDARSVSIAAASIMAKVFRDDYMTQLSKDYPEYGFEKNAGYGTKQHLLAIDDIGIMKEHRKSFEPIKSLL</sequence>
<gene>
    <name evidence="1" type="primary">rnhB</name>
    <name type="ordered locus">SAV1244</name>
</gene>
<name>RNH2_STAAM</name>
<dbReference type="EC" id="3.1.26.4" evidence="1"/>
<dbReference type="EMBL" id="BA000017">
    <property type="protein sequence ID" value="BAB57406.1"/>
    <property type="molecule type" value="Genomic_DNA"/>
</dbReference>
<dbReference type="RefSeq" id="WP_000176393.1">
    <property type="nucleotide sequence ID" value="NC_002758.2"/>
</dbReference>
<dbReference type="SMR" id="P66675"/>
<dbReference type="KEGG" id="sav:SAV1244"/>
<dbReference type="HOGENOM" id="CLU_036532_2_1_9"/>
<dbReference type="PhylomeDB" id="P66675"/>
<dbReference type="Proteomes" id="UP000002481">
    <property type="component" value="Chromosome"/>
</dbReference>
<dbReference type="GO" id="GO:0005737">
    <property type="term" value="C:cytoplasm"/>
    <property type="evidence" value="ECO:0007669"/>
    <property type="project" value="UniProtKB-SubCell"/>
</dbReference>
<dbReference type="GO" id="GO:0032299">
    <property type="term" value="C:ribonuclease H2 complex"/>
    <property type="evidence" value="ECO:0007669"/>
    <property type="project" value="TreeGrafter"/>
</dbReference>
<dbReference type="GO" id="GO:0030145">
    <property type="term" value="F:manganese ion binding"/>
    <property type="evidence" value="ECO:0007669"/>
    <property type="project" value="UniProtKB-UniRule"/>
</dbReference>
<dbReference type="GO" id="GO:0003723">
    <property type="term" value="F:RNA binding"/>
    <property type="evidence" value="ECO:0007669"/>
    <property type="project" value="InterPro"/>
</dbReference>
<dbReference type="GO" id="GO:0004523">
    <property type="term" value="F:RNA-DNA hybrid ribonuclease activity"/>
    <property type="evidence" value="ECO:0007669"/>
    <property type="project" value="UniProtKB-UniRule"/>
</dbReference>
<dbReference type="GO" id="GO:0043137">
    <property type="term" value="P:DNA replication, removal of RNA primer"/>
    <property type="evidence" value="ECO:0007669"/>
    <property type="project" value="TreeGrafter"/>
</dbReference>
<dbReference type="GO" id="GO:0006298">
    <property type="term" value="P:mismatch repair"/>
    <property type="evidence" value="ECO:0007669"/>
    <property type="project" value="TreeGrafter"/>
</dbReference>
<dbReference type="CDD" id="cd07182">
    <property type="entry name" value="RNase_HII_bacteria_HII_like"/>
    <property type="match status" value="1"/>
</dbReference>
<dbReference type="FunFam" id="3.30.420.10:FF:000006">
    <property type="entry name" value="Ribonuclease HII"/>
    <property type="match status" value="1"/>
</dbReference>
<dbReference type="Gene3D" id="3.30.420.10">
    <property type="entry name" value="Ribonuclease H-like superfamily/Ribonuclease H"/>
    <property type="match status" value="1"/>
</dbReference>
<dbReference type="HAMAP" id="MF_00052_B">
    <property type="entry name" value="RNase_HII_B"/>
    <property type="match status" value="1"/>
</dbReference>
<dbReference type="InterPro" id="IPR022898">
    <property type="entry name" value="RNase_HII"/>
</dbReference>
<dbReference type="InterPro" id="IPR001352">
    <property type="entry name" value="RNase_HII/HIII"/>
</dbReference>
<dbReference type="InterPro" id="IPR024567">
    <property type="entry name" value="RNase_HII/HIII_dom"/>
</dbReference>
<dbReference type="InterPro" id="IPR012337">
    <property type="entry name" value="RNaseH-like_sf"/>
</dbReference>
<dbReference type="InterPro" id="IPR036397">
    <property type="entry name" value="RNaseH_sf"/>
</dbReference>
<dbReference type="NCBIfam" id="NF000594">
    <property type="entry name" value="PRK00015.1-1"/>
    <property type="match status" value="1"/>
</dbReference>
<dbReference type="NCBIfam" id="NF000595">
    <property type="entry name" value="PRK00015.1-3"/>
    <property type="match status" value="1"/>
</dbReference>
<dbReference type="PANTHER" id="PTHR10954">
    <property type="entry name" value="RIBONUCLEASE H2 SUBUNIT A"/>
    <property type="match status" value="1"/>
</dbReference>
<dbReference type="PANTHER" id="PTHR10954:SF18">
    <property type="entry name" value="RIBONUCLEASE HII"/>
    <property type="match status" value="1"/>
</dbReference>
<dbReference type="Pfam" id="PF01351">
    <property type="entry name" value="RNase_HII"/>
    <property type="match status" value="1"/>
</dbReference>
<dbReference type="SUPFAM" id="SSF53098">
    <property type="entry name" value="Ribonuclease H-like"/>
    <property type="match status" value="1"/>
</dbReference>
<dbReference type="PROSITE" id="PS51975">
    <property type="entry name" value="RNASE_H_2"/>
    <property type="match status" value="1"/>
</dbReference>
<evidence type="ECO:0000255" key="1">
    <source>
        <dbReference type="HAMAP-Rule" id="MF_00052"/>
    </source>
</evidence>
<evidence type="ECO:0000255" key="2">
    <source>
        <dbReference type="PROSITE-ProRule" id="PRU01319"/>
    </source>
</evidence>
<organism>
    <name type="scientific">Staphylococcus aureus (strain Mu50 / ATCC 700699)</name>
    <dbReference type="NCBI Taxonomy" id="158878"/>
    <lineage>
        <taxon>Bacteria</taxon>
        <taxon>Bacillati</taxon>
        <taxon>Bacillota</taxon>
        <taxon>Bacilli</taxon>
        <taxon>Bacillales</taxon>
        <taxon>Staphylococcaceae</taxon>
        <taxon>Staphylococcus</taxon>
    </lineage>
</organism>
<protein>
    <recommendedName>
        <fullName evidence="1">Ribonuclease HII</fullName>
        <shortName evidence="1">RNase HII</shortName>
        <ecNumber evidence="1">3.1.26.4</ecNumber>
    </recommendedName>
</protein>
<proteinExistence type="inferred from homology"/>
<accession>P66675</accession>
<accession>Q99UM6</accession>
<keyword id="KW-0963">Cytoplasm</keyword>
<keyword id="KW-0255">Endonuclease</keyword>
<keyword id="KW-0378">Hydrolase</keyword>
<keyword id="KW-0464">Manganese</keyword>
<keyword id="KW-0479">Metal-binding</keyword>
<keyword id="KW-0540">Nuclease</keyword>